<name>RS21_CHLCH</name>
<feature type="chain" id="PRO_0000266654" description="Small ribosomal subunit protein bS21">
    <location>
        <begin position="1"/>
        <end position="65"/>
    </location>
</feature>
<keyword id="KW-0687">Ribonucleoprotein</keyword>
<keyword id="KW-0689">Ribosomal protein</keyword>
<sequence length="65" mass="7861">MVSVQINDNETIDKMLKRFKKKYERAGVLKEYRANAYFVKPSIDNRLKRSRSRRRAQRANEERNS</sequence>
<evidence type="ECO:0000255" key="1">
    <source>
        <dbReference type="HAMAP-Rule" id="MF_00358"/>
    </source>
</evidence>
<evidence type="ECO:0000305" key="2"/>
<organism>
    <name type="scientific">Chlorobium chlorochromatii (strain CaD3)</name>
    <dbReference type="NCBI Taxonomy" id="340177"/>
    <lineage>
        <taxon>Bacteria</taxon>
        <taxon>Pseudomonadati</taxon>
        <taxon>Chlorobiota</taxon>
        <taxon>Chlorobiia</taxon>
        <taxon>Chlorobiales</taxon>
        <taxon>Chlorobiaceae</taxon>
        <taxon>Chlorobium/Pelodictyon group</taxon>
        <taxon>Chlorobium</taxon>
    </lineage>
</organism>
<comment type="similarity">
    <text evidence="1">Belongs to the bacterial ribosomal protein bS21 family.</text>
</comment>
<proteinExistence type="inferred from homology"/>
<gene>
    <name evidence="1" type="primary">rpsU</name>
    <name type="ordered locus">Cag_1632</name>
</gene>
<accession>Q3AQ40</accession>
<protein>
    <recommendedName>
        <fullName evidence="1">Small ribosomal subunit protein bS21</fullName>
    </recommendedName>
    <alternativeName>
        <fullName evidence="2">30S ribosomal protein S21</fullName>
    </alternativeName>
</protein>
<reference key="1">
    <citation type="submission" date="2005-08" db="EMBL/GenBank/DDBJ databases">
        <title>Complete sequence of Chlorobium chlorochromatii CaD3.</title>
        <authorList>
            <consortium name="US DOE Joint Genome Institute"/>
            <person name="Copeland A."/>
            <person name="Lucas S."/>
            <person name="Lapidus A."/>
            <person name="Barry K."/>
            <person name="Detter J.C."/>
            <person name="Glavina T."/>
            <person name="Hammon N."/>
            <person name="Israni S."/>
            <person name="Pitluck S."/>
            <person name="Bryant D."/>
            <person name="Schmutz J."/>
            <person name="Larimer F."/>
            <person name="Land M."/>
            <person name="Kyrpides N."/>
            <person name="Ivanova N."/>
            <person name="Richardson P."/>
        </authorList>
    </citation>
    <scope>NUCLEOTIDE SEQUENCE [LARGE SCALE GENOMIC DNA]</scope>
    <source>
        <strain>CaD3</strain>
    </source>
</reference>
<dbReference type="EMBL" id="CP000108">
    <property type="protein sequence ID" value="ABB28885.1"/>
    <property type="molecule type" value="Genomic_DNA"/>
</dbReference>
<dbReference type="SMR" id="Q3AQ40"/>
<dbReference type="STRING" id="340177.Cag_1632"/>
<dbReference type="KEGG" id="cch:Cag_1632"/>
<dbReference type="eggNOG" id="COG0828">
    <property type="taxonomic scope" value="Bacteria"/>
</dbReference>
<dbReference type="HOGENOM" id="CLU_159258_2_1_10"/>
<dbReference type="OrthoDB" id="598353at2"/>
<dbReference type="GO" id="GO:1990904">
    <property type="term" value="C:ribonucleoprotein complex"/>
    <property type="evidence" value="ECO:0007669"/>
    <property type="project" value="UniProtKB-KW"/>
</dbReference>
<dbReference type="GO" id="GO:0005840">
    <property type="term" value="C:ribosome"/>
    <property type="evidence" value="ECO:0007669"/>
    <property type="project" value="UniProtKB-KW"/>
</dbReference>
<dbReference type="GO" id="GO:0003735">
    <property type="term" value="F:structural constituent of ribosome"/>
    <property type="evidence" value="ECO:0007669"/>
    <property type="project" value="InterPro"/>
</dbReference>
<dbReference type="GO" id="GO:0006412">
    <property type="term" value="P:translation"/>
    <property type="evidence" value="ECO:0007669"/>
    <property type="project" value="UniProtKB-UniRule"/>
</dbReference>
<dbReference type="Gene3D" id="1.20.5.1150">
    <property type="entry name" value="Ribosomal protein S8"/>
    <property type="match status" value="1"/>
</dbReference>
<dbReference type="HAMAP" id="MF_00358">
    <property type="entry name" value="Ribosomal_bS21"/>
    <property type="match status" value="1"/>
</dbReference>
<dbReference type="InterPro" id="IPR001911">
    <property type="entry name" value="Ribosomal_bS21"/>
</dbReference>
<dbReference type="InterPro" id="IPR038380">
    <property type="entry name" value="Ribosomal_bS21_sf"/>
</dbReference>
<dbReference type="NCBIfam" id="TIGR00030">
    <property type="entry name" value="S21p"/>
    <property type="match status" value="1"/>
</dbReference>
<dbReference type="Pfam" id="PF01165">
    <property type="entry name" value="Ribosomal_S21"/>
    <property type="match status" value="1"/>
</dbReference>
<dbReference type="PRINTS" id="PR00976">
    <property type="entry name" value="RIBOSOMALS21"/>
</dbReference>